<proteinExistence type="evidence at protein level"/>
<accession>Q6GV23</accession>
<accession>Q696L8</accession>
<sequence>MSSKGGSSRLGSKDLKKMTSRTERELRDSGRVRGEVERVEKRLRATAKVKEQPPTGDYKRRALASPGETAAPTFLVDSRGIPRKTSSTAPRKATLRPASSSPRLASSSRPTESTLPSSSSRALQGASSSSSSRPRRLHESASGRGGSGGSAGELRQEKKRLPELEAAEAAPASCVVELRDVTARKGRTSPATPPETAGSSVCGQGSHARTAEKLEEGTASHRDGSRRGSVDAETWATPGDGSSSHEFESSPQREERMQPQETGRRELSSEPRSGDLTKNGGDGGPRRHSCAWRKWREHMIQSFDITTHPFPPRGDGSPRRGKFLMIFLTSSVLFFVFLQELVLNVTTFNGRCMSPVLYPSHDAPESERTPRVISFGYGACEHNLGVSLFRREETKKDPRGRWTPGPLTERCASGRCASDDGWPSDLVQRGRAQRSPAAFDSPNPRVFSSLGALDTNKVRNYGEMFRVVWGMFLHGGWMHLLLNVSCQAQTLWILEPAWGFLRTLSLWIVGGVSGSLLSAVANPCTVTVGSSGAFYGLLGALVPFSIEYWDHIASPAWFLFCVSVLVMVAQFGNMVGVQGVDNNAHLGGLIGGLLFGFATIRSVHAFRWQGVAERMASSTLFWWMFPAEKRRSLREDNLQRVAREREERSSGRIPPPKFVWKFRGHEREWCVRFAAAVGLVTFWSVLWLYLLVPSYYESLSSPPGNFSFLGSTGCHCCRVQPFPGEEDKLPAFHPVRVNRGLFWCFVSEGVANLFCGRSSALNRGADVYGQTRQFEEALGDLPSARAGEAPLRIAKEEGESASVWQRLVKSAKKTYNAVLGNTTTPAAPSAAELAQQTRAGQ</sequence>
<gene>
    <name type="primary">ROM5</name>
    <name type="synonym">MPP1</name>
</gene>
<evidence type="ECO:0000250" key="1"/>
<evidence type="ECO:0000255" key="2"/>
<evidence type="ECO:0000256" key="3">
    <source>
        <dbReference type="SAM" id="MobiDB-lite"/>
    </source>
</evidence>
<evidence type="ECO:0000269" key="4">
    <source>
    </source>
</evidence>
<evidence type="ECO:0000269" key="5">
    <source>
    </source>
</evidence>
<evidence type="ECO:0000305" key="6"/>
<feature type="chain" id="PRO_0000239078" description="Rhomboid-like protease 5">
    <location>
        <begin position="1"/>
        <end position="841"/>
    </location>
</feature>
<feature type="transmembrane region" description="Helical" evidence="2">
    <location>
        <begin position="323"/>
        <end position="343"/>
    </location>
</feature>
<feature type="transmembrane region" description="Helical" evidence="2">
    <location>
        <begin position="464"/>
        <end position="484"/>
    </location>
</feature>
<feature type="transmembrane region" description="Helical" evidence="2">
    <location>
        <begin position="492"/>
        <end position="512"/>
    </location>
</feature>
<feature type="transmembrane region" description="Helical" evidence="2">
    <location>
        <begin position="526"/>
        <end position="546"/>
    </location>
</feature>
<feature type="transmembrane region" description="Helical" evidence="2">
    <location>
        <begin position="571"/>
        <end position="590"/>
    </location>
</feature>
<feature type="transmembrane region" description="Helical" evidence="2">
    <location>
        <begin position="673"/>
        <end position="693"/>
    </location>
</feature>
<feature type="region of interest" description="Disordered" evidence="3">
    <location>
        <begin position="1"/>
        <end position="289"/>
    </location>
</feature>
<feature type="compositionally biased region" description="Low complexity" evidence="3">
    <location>
        <begin position="1"/>
        <end position="10"/>
    </location>
</feature>
<feature type="compositionally biased region" description="Basic and acidic residues" evidence="3">
    <location>
        <begin position="11"/>
        <end position="51"/>
    </location>
</feature>
<feature type="compositionally biased region" description="Low complexity" evidence="3">
    <location>
        <begin position="95"/>
        <end position="132"/>
    </location>
</feature>
<feature type="compositionally biased region" description="Basic and acidic residues" evidence="3">
    <location>
        <begin position="154"/>
        <end position="163"/>
    </location>
</feature>
<feature type="compositionally biased region" description="Basic and acidic residues" evidence="3">
    <location>
        <begin position="209"/>
        <end position="230"/>
    </location>
</feature>
<feature type="compositionally biased region" description="Basic and acidic residues" evidence="3">
    <location>
        <begin position="243"/>
        <end position="275"/>
    </location>
</feature>
<feature type="active site" description="Nucleophile" evidence="1">
    <location>
        <position position="531"/>
    </location>
</feature>
<feature type="active site" evidence="1">
    <location>
        <position position="585"/>
    </location>
</feature>
<feature type="mutagenesis site" description="Loss of activity." evidence="5">
    <original>S</original>
    <variation>A</variation>
    <location>
        <position position="531"/>
    </location>
</feature>
<keyword id="KW-0378">Hydrolase</keyword>
<keyword id="KW-0472">Membrane</keyword>
<keyword id="KW-0645">Protease</keyword>
<keyword id="KW-0720">Serine protease</keyword>
<keyword id="KW-0812">Transmembrane</keyword>
<keyword id="KW-1133">Transmembrane helix</keyword>
<name>RHBL5_TOXGO</name>
<comment type="function">
    <text evidence="4 5">Serine protease involved in intramembrane proteolysis. Cleaves microneme adhesins, such as MIC2. This step is essential for efficient invasion of host cells. Catalyzes intramembrane proteolysis of AMA1.</text>
</comment>
<comment type="catalytic activity">
    <reaction>
        <text>Cleaves type-1 transmembrane domains using a catalytic dyad composed of serine and histidine that are contributed by different transmembrane domains.</text>
        <dbReference type="EC" id="3.4.21.105"/>
    </reaction>
</comment>
<comment type="subcellular location">
    <subcellularLocation>
        <location evidence="5">Membrane</location>
        <topology evidence="5">Multi-pass membrane protein</topology>
    </subcellularLocation>
    <text>Detected primarily at the posterior surface of intracellular tachyzoites. Detected in patches on the cell surface of extracellular tachyzoites. Concentrated at the posterior end of tachyzoites after induction of microneme secretion prior to invasion of host cells.</text>
</comment>
<comment type="developmental stage">
    <text evidence="5">Highly expressed in tachyzoites. Detected at low levels in bradyzoites and sporozoites.</text>
</comment>
<comment type="similarity">
    <text evidence="6">Belongs to the peptidase S54 family.</text>
</comment>
<comment type="sequence caution" evidence="6">
    <conflict type="erroneous initiation">
        <sequence resource="EMBL-CDS" id="AAT84606"/>
    </conflict>
</comment>
<organism>
    <name type="scientific">Toxoplasma gondii</name>
    <dbReference type="NCBI Taxonomy" id="5811"/>
    <lineage>
        <taxon>Eukaryota</taxon>
        <taxon>Sar</taxon>
        <taxon>Alveolata</taxon>
        <taxon>Apicomplexa</taxon>
        <taxon>Conoidasida</taxon>
        <taxon>Coccidia</taxon>
        <taxon>Eucoccidiorida</taxon>
        <taxon>Eimeriorina</taxon>
        <taxon>Sarcocystidae</taxon>
        <taxon>Toxoplasma</taxon>
    </lineage>
</organism>
<protein>
    <recommendedName>
        <fullName>Rhomboid-like protease 5</fullName>
        <ecNumber>3.4.21.105</ecNumber>
    </recommendedName>
    <alternativeName>
        <fullName>Microneme protein protease 1</fullName>
        <shortName>MPP-1</shortName>
    </alternativeName>
</protein>
<dbReference type="EC" id="3.4.21.105"/>
<dbReference type="EMBL" id="AY634626">
    <property type="protein sequence ID" value="AAT47708.1"/>
    <property type="molecule type" value="mRNA"/>
</dbReference>
<dbReference type="EMBL" id="AY587208">
    <property type="protein sequence ID" value="AAT84606.1"/>
    <property type="status" value="ALT_INIT"/>
    <property type="molecule type" value="mRNA"/>
</dbReference>
<dbReference type="MEROPS" id="S54.023"/>
<dbReference type="EnsemblProtists" id="TGME49_294690-t26_1">
    <property type="protein sequence ID" value="TGME49_294690-t26_1"/>
    <property type="gene ID" value="TGME49_294690"/>
</dbReference>
<dbReference type="VEuPathDB" id="ToxoDB:TGARI_294690"/>
<dbReference type="VEuPathDB" id="ToxoDB:TGCAST_294690A"/>
<dbReference type="VEuPathDB" id="ToxoDB:TGCAST_294690B"/>
<dbReference type="VEuPathDB" id="ToxoDB:TGCOUG_294690"/>
<dbReference type="VEuPathDB" id="ToxoDB:TGCOUG_395050"/>
<dbReference type="VEuPathDB" id="ToxoDB:TGDOM2_294690A"/>
<dbReference type="VEuPathDB" id="ToxoDB:TGDOM2_294690B"/>
<dbReference type="VEuPathDB" id="ToxoDB:TGDOM2_294690C"/>
<dbReference type="VEuPathDB" id="ToxoDB:TGFOU_294690A"/>
<dbReference type="VEuPathDB" id="ToxoDB:TGFOU_294690B"/>
<dbReference type="VEuPathDB" id="ToxoDB:TGGT1_294690"/>
<dbReference type="VEuPathDB" id="ToxoDB:TGMAS_294690"/>
<dbReference type="VEuPathDB" id="ToxoDB:TGME49_294690"/>
<dbReference type="VEuPathDB" id="ToxoDB:TGP89_294690"/>
<dbReference type="VEuPathDB" id="ToxoDB:TGPRC2_294690"/>
<dbReference type="VEuPathDB" id="ToxoDB:TGRH88_019690"/>
<dbReference type="VEuPathDB" id="ToxoDB:TGRUB_294690A"/>
<dbReference type="VEuPathDB" id="ToxoDB:TGRUB_294690B"/>
<dbReference type="VEuPathDB" id="ToxoDB:TGVAND_294690"/>
<dbReference type="VEuPathDB" id="ToxoDB:TGVEG_294690"/>
<dbReference type="OMA" id="GPQEPKD"/>
<dbReference type="BRENDA" id="3.4.21.105">
    <property type="organism ID" value="6411"/>
</dbReference>
<dbReference type="GO" id="GO:0016020">
    <property type="term" value="C:membrane"/>
    <property type="evidence" value="ECO:0007669"/>
    <property type="project" value="UniProtKB-SubCell"/>
</dbReference>
<dbReference type="GO" id="GO:0004252">
    <property type="term" value="F:serine-type endopeptidase activity"/>
    <property type="evidence" value="ECO:0007669"/>
    <property type="project" value="InterPro"/>
</dbReference>
<dbReference type="GO" id="GO:0006508">
    <property type="term" value="P:proteolysis"/>
    <property type="evidence" value="ECO:0007669"/>
    <property type="project" value="UniProtKB-KW"/>
</dbReference>
<dbReference type="Gene3D" id="1.20.1540.10">
    <property type="entry name" value="Rhomboid-like"/>
    <property type="match status" value="1"/>
</dbReference>
<dbReference type="InterPro" id="IPR017092">
    <property type="entry name" value="Pept_S54_Rhomboid-like_Rom4/5"/>
</dbReference>
<dbReference type="InterPro" id="IPR002610">
    <property type="entry name" value="Peptidase_S54_rhomboid-like"/>
</dbReference>
<dbReference type="InterPro" id="IPR022764">
    <property type="entry name" value="Peptidase_S54_rhomboid_dom"/>
</dbReference>
<dbReference type="InterPro" id="IPR035952">
    <property type="entry name" value="Rhomboid-like_sf"/>
</dbReference>
<dbReference type="PANTHER" id="PTHR22936:SF69">
    <property type="entry name" value="RHOMBOID-LIKE PROTEIN"/>
    <property type="match status" value="1"/>
</dbReference>
<dbReference type="PANTHER" id="PTHR22936">
    <property type="entry name" value="RHOMBOID-RELATED"/>
    <property type="match status" value="1"/>
</dbReference>
<dbReference type="Pfam" id="PF01694">
    <property type="entry name" value="Rhomboid"/>
    <property type="match status" value="1"/>
</dbReference>
<dbReference type="PIRSF" id="PIRSF037023">
    <property type="entry name" value="Rhomboid-like_ROM4_ROM5"/>
    <property type="match status" value="1"/>
</dbReference>
<dbReference type="SUPFAM" id="SSF144091">
    <property type="entry name" value="Rhomboid-like"/>
    <property type="match status" value="1"/>
</dbReference>
<reference key="1">
    <citation type="journal article" date="2004" name="Curr. Opin. Microbiol.">
        <title>Host cell invasion by the apicomplexans: the significance of microneme protein proteolysis.</title>
        <authorList>
            <person name="Dowse T."/>
            <person name="Soldati D."/>
        </authorList>
    </citation>
    <scope>NUCLEOTIDE SEQUENCE [MRNA]</scope>
    <source>
        <strain>RH</strain>
    </source>
</reference>
<reference key="2">
    <citation type="journal article" date="2005" name="Proc. Natl. Acad. Sci. U.S.A.">
        <title>A spatially localized rhomboid protease cleaves cell surface adhesins essential for invasion by Toxoplasma.</title>
        <authorList>
            <person name="Brossier F."/>
            <person name="Jewett T.J."/>
            <person name="Sibley L.D."/>
            <person name="Urban S."/>
        </authorList>
    </citation>
    <scope>NUCLEOTIDE SEQUENCE [MRNA] OF 161-841</scope>
    <scope>FUNCTION</scope>
    <scope>MUTAGENESIS OF SER-531</scope>
    <scope>SUBCELLULAR LOCATION</scope>
    <scope>DEVELOPMENTAL STAGE</scope>
</reference>
<reference key="3">
    <citation type="journal article" date="2002" name="EMBO J.">
        <title>Intramembrane cleavage of microneme proteins at the surface of the apicomplexan parasite Toxoplasma gondii.</title>
        <authorList>
            <person name="Opitz C."/>
            <person name="Di Cristina M."/>
            <person name="Reiss M."/>
            <person name="Ruppert T."/>
            <person name="Crisanti A."/>
            <person name="Soldati D."/>
        </authorList>
    </citation>
    <scope>FUNCTION</scope>
</reference>